<gene>
    <name evidence="1" type="primary">serS</name>
    <name type="ordered locus">BUsg_303</name>
</gene>
<name>SYS_BUCAP</name>
<evidence type="ECO:0000255" key="1">
    <source>
        <dbReference type="HAMAP-Rule" id="MF_00176"/>
    </source>
</evidence>
<evidence type="ECO:0000305" key="2"/>
<protein>
    <recommendedName>
        <fullName evidence="1">Serine--tRNA ligase</fullName>
        <ecNumber evidence="1">6.1.1.11</ecNumber>
    </recommendedName>
    <alternativeName>
        <fullName evidence="1">Seryl-tRNA synthetase</fullName>
        <shortName evidence="1">SerRS</shortName>
    </alternativeName>
    <alternativeName>
        <fullName evidence="1">Seryl-tRNA(Ser/Sec) synthetase</fullName>
    </alternativeName>
</protein>
<keyword id="KW-0030">Aminoacyl-tRNA synthetase</keyword>
<keyword id="KW-0067">ATP-binding</keyword>
<keyword id="KW-0963">Cytoplasm</keyword>
<keyword id="KW-0436">Ligase</keyword>
<keyword id="KW-0547">Nucleotide-binding</keyword>
<keyword id="KW-0648">Protein biosynthesis</keyword>
<reference key="1">
    <citation type="journal article" date="1997" name="Curr. Microbiol.">
        <title>Nucleotide sequence of a DNA fragment from Buchnera aphidicola (Aphid endosymbiont) containing the genes aspS-trxB-serS-serC-aroA-rpsA-himD-tpiA.</title>
        <authorList>
            <person name="Thao M.L."/>
            <person name="Baumann P."/>
        </authorList>
    </citation>
    <scope>NUCLEOTIDE SEQUENCE [GENOMIC DNA]</scope>
</reference>
<reference key="2">
    <citation type="journal article" date="2002" name="Science">
        <title>50 million years of genomic stasis in endosymbiotic bacteria.</title>
        <authorList>
            <person name="Tamas I."/>
            <person name="Klasson L."/>
            <person name="Canbaeck B."/>
            <person name="Naeslund A.K."/>
            <person name="Eriksson A.-S."/>
            <person name="Wernegreen J.J."/>
            <person name="Sandstroem J.P."/>
            <person name="Moran N.A."/>
            <person name="Andersson S.G.E."/>
        </authorList>
    </citation>
    <scope>NUCLEOTIDE SEQUENCE [LARGE SCALE GENOMIC DNA]</scope>
    <source>
        <strain>Sg</strain>
    </source>
</reference>
<accession>P81434</accession>
<proteinExistence type="inferred from homology"/>
<comment type="function">
    <text evidence="1">Catalyzes the attachment of serine to tRNA(Ser). Is also able to aminoacylate tRNA(Sec) with serine, to form the misacylated tRNA L-seryl-tRNA(Sec), which will be further converted into selenocysteinyl-tRNA(Sec).</text>
</comment>
<comment type="catalytic activity">
    <reaction evidence="1">
        <text>tRNA(Ser) + L-serine + ATP = L-seryl-tRNA(Ser) + AMP + diphosphate + H(+)</text>
        <dbReference type="Rhea" id="RHEA:12292"/>
        <dbReference type="Rhea" id="RHEA-COMP:9669"/>
        <dbReference type="Rhea" id="RHEA-COMP:9703"/>
        <dbReference type="ChEBI" id="CHEBI:15378"/>
        <dbReference type="ChEBI" id="CHEBI:30616"/>
        <dbReference type="ChEBI" id="CHEBI:33019"/>
        <dbReference type="ChEBI" id="CHEBI:33384"/>
        <dbReference type="ChEBI" id="CHEBI:78442"/>
        <dbReference type="ChEBI" id="CHEBI:78533"/>
        <dbReference type="ChEBI" id="CHEBI:456215"/>
        <dbReference type="EC" id="6.1.1.11"/>
    </reaction>
</comment>
<comment type="catalytic activity">
    <reaction evidence="1">
        <text>tRNA(Sec) + L-serine + ATP = L-seryl-tRNA(Sec) + AMP + diphosphate + H(+)</text>
        <dbReference type="Rhea" id="RHEA:42580"/>
        <dbReference type="Rhea" id="RHEA-COMP:9742"/>
        <dbReference type="Rhea" id="RHEA-COMP:10128"/>
        <dbReference type="ChEBI" id="CHEBI:15378"/>
        <dbReference type="ChEBI" id="CHEBI:30616"/>
        <dbReference type="ChEBI" id="CHEBI:33019"/>
        <dbReference type="ChEBI" id="CHEBI:33384"/>
        <dbReference type="ChEBI" id="CHEBI:78442"/>
        <dbReference type="ChEBI" id="CHEBI:78533"/>
        <dbReference type="ChEBI" id="CHEBI:456215"/>
        <dbReference type="EC" id="6.1.1.11"/>
    </reaction>
</comment>
<comment type="pathway">
    <text evidence="1">Aminoacyl-tRNA biosynthesis; selenocysteinyl-tRNA(Sec) biosynthesis; L-seryl-tRNA(Sec) from L-serine and tRNA(Sec): step 1/1.</text>
</comment>
<comment type="subunit">
    <text evidence="1">Homodimer. The tRNA molecule binds across the dimer.</text>
</comment>
<comment type="subcellular location">
    <subcellularLocation>
        <location evidence="1">Cytoplasm</location>
    </subcellularLocation>
</comment>
<comment type="domain">
    <text evidence="1">Consists of two distinct domains, a catalytic core and a N-terminal extension that is involved in tRNA binding.</text>
</comment>
<comment type="similarity">
    <text evidence="1">Belongs to the class-II aminoacyl-tRNA synthetase family. Type-1 seryl-tRNA synthetase subfamily.</text>
</comment>
<feature type="chain" id="PRO_0000122019" description="Serine--tRNA ligase">
    <location>
        <begin position="1"/>
        <end position="427"/>
    </location>
</feature>
<feature type="binding site" evidence="1">
    <location>
        <begin position="233"/>
        <end position="235"/>
    </location>
    <ligand>
        <name>L-serine</name>
        <dbReference type="ChEBI" id="CHEBI:33384"/>
    </ligand>
</feature>
<feature type="binding site" evidence="1">
    <location>
        <begin position="264"/>
        <end position="266"/>
    </location>
    <ligand>
        <name>ATP</name>
        <dbReference type="ChEBI" id="CHEBI:30616"/>
    </ligand>
</feature>
<feature type="binding site" evidence="1">
    <location>
        <position position="287"/>
    </location>
    <ligand>
        <name>L-serine</name>
        <dbReference type="ChEBI" id="CHEBI:33384"/>
    </ligand>
</feature>
<feature type="binding site" evidence="1">
    <location>
        <begin position="351"/>
        <end position="354"/>
    </location>
    <ligand>
        <name>ATP</name>
        <dbReference type="ChEBI" id="CHEBI:30616"/>
    </ligand>
</feature>
<feature type="binding site" evidence="1">
    <location>
        <position position="387"/>
    </location>
    <ligand>
        <name>L-serine</name>
        <dbReference type="ChEBI" id="CHEBI:33384"/>
    </ligand>
</feature>
<feature type="sequence conflict" description="In Ref. 1; AAC05434." evidence="2" ref="1">
    <original>D</original>
    <variation>E</variation>
    <location>
        <position position="45"/>
    </location>
</feature>
<sequence>MLNPYLLRNQIDAISKKLLKKKFKLDISLISSLEKKRKKLQIKTDNLQYKHNTLSALFKKEKKIQELDENLKRTLTKSSKNLSELKIELNLLQEKIHNFSLSIPNIPSDDVPEGNSSENNKIVKYWGKKREYSFAVRDHVEIGNKLNQLDWKSSAKISGARFIVMKGNIALLHRALSQFMLDLHTIKHGYTETYVPYLVNHDSLYGTGQLPKFTDDLFHINSIDKKKYVLIPTAEVPLTNLFSNQILNETELPIMLTAHTPCFRSEASSYGRDSKGLIRLHQFDKVELVQIIQPELSMNALELLTHHAEKVLQLLELPYRKVLLCGGEMGFSATKTYDLEVWFPSQKKYREISSCSNMSDFQARRMKTRYKKKKEKSNSFVHTLNGSGLAIGRTLAAILENYQDSDGRVTIPKILQKKYMQGIEYIN</sequence>
<dbReference type="EC" id="6.1.1.11" evidence="1"/>
<dbReference type="EMBL" id="L43549">
    <property type="protein sequence ID" value="AAC05434.1"/>
    <property type="molecule type" value="Genomic_DNA"/>
</dbReference>
<dbReference type="EMBL" id="AE013218">
    <property type="protein sequence ID" value="AAM67857.1"/>
    <property type="molecule type" value="Genomic_DNA"/>
</dbReference>
<dbReference type="RefSeq" id="WP_011053824.1">
    <property type="nucleotide sequence ID" value="NC_004061.1"/>
</dbReference>
<dbReference type="SMR" id="P81434"/>
<dbReference type="STRING" id="198804.BUsg_303"/>
<dbReference type="GeneID" id="93003772"/>
<dbReference type="KEGG" id="bas:BUsg_303"/>
<dbReference type="eggNOG" id="COG0172">
    <property type="taxonomic scope" value="Bacteria"/>
</dbReference>
<dbReference type="HOGENOM" id="CLU_023797_1_1_6"/>
<dbReference type="UniPathway" id="UPA00906">
    <property type="reaction ID" value="UER00895"/>
</dbReference>
<dbReference type="Proteomes" id="UP000000416">
    <property type="component" value="Chromosome"/>
</dbReference>
<dbReference type="GO" id="GO:0005737">
    <property type="term" value="C:cytoplasm"/>
    <property type="evidence" value="ECO:0007669"/>
    <property type="project" value="UniProtKB-SubCell"/>
</dbReference>
<dbReference type="GO" id="GO:0005524">
    <property type="term" value="F:ATP binding"/>
    <property type="evidence" value="ECO:0007669"/>
    <property type="project" value="UniProtKB-UniRule"/>
</dbReference>
<dbReference type="GO" id="GO:0004828">
    <property type="term" value="F:serine-tRNA ligase activity"/>
    <property type="evidence" value="ECO:0007669"/>
    <property type="project" value="UniProtKB-UniRule"/>
</dbReference>
<dbReference type="GO" id="GO:0016260">
    <property type="term" value="P:selenocysteine biosynthetic process"/>
    <property type="evidence" value="ECO:0007669"/>
    <property type="project" value="UniProtKB-UniRule"/>
</dbReference>
<dbReference type="GO" id="GO:0006434">
    <property type="term" value="P:seryl-tRNA aminoacylation"/>
    <property type="evidence" value="ECO:0007669"/>
    <property type="project" value="UniProtKB-UniRule"/>
</dbReference>
<dbReference type="CDD" id="cd00770">
    <property type="entry name" value="SerRS_core"/>
    <property type="match status" value="1"/>
</dbReference>
<dbReference type="Gene3D" id="3.30.930.10">
    <property type="entry name" value="Bira Bifunctional Protein, Domain 2"/>
    <property type="match status" value="1"/>
</dbReference>
<dbReference type="Gene3D" id="1.10.287.40">
    <property type="entry name" value="Serine-tRNA synthetase, tRNA binding domain"/>
    <property type="match status" value="1"/>
</dbReference>
<dbReference type="HAMAP" id="MF_00176">
    <property type="entry name" value="Ser_tRNA_synth_type1"/>
    <property type="match status" value="1"/>
</dbReference>
<dbReference type="InterPro" id="IPR002314">
    <property type="entry name" value="aa-tRNA-synt_IIb"/>
</dbReference>
<dbReference type="InterPro" id="IPR006195">
    <property type="entry name" value="aa-tRNA-synth_II"/>
</dbReference>
<dbReference type="InterPro" id="IPR045864">
    <property type="entry name" value="aa-tRNA-synth_II/BPL/LPL"/>
</dbReference>
<dbReference type="InterPro" id="IPR002317">
    <property type="entry name" value="Ser-tRNA-ligase_type_1"/>
</dbReference>
<dbReference type="InterPro" id="IPR015866">
    <property type="entry name" value="Ser-tRNA-synth_1_N"/>
</dbReference>
<dbReference type="InterPro" id="IPR042103">
    <property type="entry name" value="SerRS_1_N_sf"/>
</dbReference>
<dbReference type="InterPro" id="IPR033729">
    <property type="entry name" value="SerRS_core"/>
</dbReference>
<dbReference type="InterPro" id="IPR010978">
    <property type="entry name" value="tRNA-bd_arm"/>
</dbReference>
<dbReference type="NCBIfam" id="TIGR00414">
    <property type="entry name" value="serS"/>
    <property type="match status" value="1"/>
</dbReference>
<dbReference type="PANTHER" id="PTHR43697:SF1">
    <property type="entry name" value="SERINE--TRNA LIGASE"/>
    <property type="match status" value="1"/>
</dbReference>
<dbReference type="PANTHER" id="PTHR43697">
    <property type="entry name" value="SERYL-TRNA SYNTHETASE"/>
    <property type="match status" value="1"/>
</dbReference>
<dbReference type="Pfam" id="PF02403">
    <property type="entry name" value="Seryl_tRNA_N"/>
    <property type="match status" value="1"/>
</dbReference>
<dbReference type="Pfam" id="PF00587">
    <property type="entry name" value="tRNA-synt_2b"/>
    <property type="match status" value="1"/>
</dbReference>
<dbReference type="PIRSF" id="PIRSF001529">
    <property type="entry name" value="Ser-tRNA-synth_IIa"/>
    <property type="match status" value="1"/>
</dbReference>
<dbReference type="PRINTS" id="PR00981">
    <property type="entry name" value="TRNASYNTHSER"/>
</dbReference>
<dbReference type="SUPFAM" id="SSF55681">
    <property type="entry name" value="Class II aaRS and biotin synthetases"/>
    <property type="match status" value="1"/>
</dbReference>
<dbReference type="SUPFAM" id="SSF46589">
    <property type="entry name" value="tRNA-binding arm"/>
    <property type="match status" value="1"/>
</dbReference>
<dbReference type="PROSITE" id="PS50862">
    <property type="entry name" value="AA_TRNA_LIGASE_II"/>
    <property type="match status" value="1"/>
</dbReference>
<organism>
    <name type="scientific">Buchnera aphidicola subsp. Schizaphis graminum (strain Sg)</name>
    <dbReference type="NCBI Taxonomy" id="198804"/>
    <lineage>
        <taxon>Bacteria</taxon>
        <taxon>Pseudomonadati</taxon>
        <taxon>Pseudomonadota</taxon>
        <taxon>Gammaproteobacteria</taxon>
        <taxon>Enterobacterales</taxon>
        <taxon>Erwiniaceae</taxon>
        <taxon>Buchnera</taxon>
    </lineage>
</organism>